<gene>
    <name type="primary">SPAM1</name>
    <name type="synonym">PH-20</name>
    <name type="synonym">PH20</name>
</gene>
<proteinExistence type="evidence at protein level"/>
<keyword id="KW-0130">Cell adhesion</keyword>
<keyword id="KW-1003">Cell membrane</keyword>
<keyword id="KW-0903">Direct protein sequencing</keyword>
<keyword id="KW-1015">Disulfide bond</keyword>
<keyword id="KW-0325">Glycoprotein</keyword>
<keyword id="KW-0326">Glycosidase</keyword>
<keyword id="KW-0336">GPI-anchor</keyword>
<keyword id="KW-0378">Hydrolase</keyword>
<keyword id="KW-0449">Lipoprotein</keyword>
<keyword id="KW-0472">Membrane</keyword>
<keyword id="KW-1185">Reference proteome</keyword>
<keyword id="KW-0732">Signal</keyword>
<reference key="1">
    <citation type="journal article" date="1990" name="J. Cell Biol.">
        <title>cDNA cloning reveals the molecular structure of a sperm surface protein, PH-20, involved in sperm-egg adhesion and the wide distribution of its gene among mammals.</title>
        <authorList>
            <person name="Lathrop W.F."/>
            <person name="Carmichael E.P."/>
            <person name="Myles D.G."/>
            <person name="Primakoff P."/>
        </authorList>
    </citation>
    <scope>NUCLEOTIDE SEQUENCE [MRNA]</scope>
    <scope>PARTIAL PROTEIN SEQUENCE</scope>
    <source>
        <strain>Hartley</strain>
    </source>
</reference>
<organism>
    <name type="scientific">Cavia porcellus</name>
    <name type="common">Guinea pig</name>
    <dbReference type="NCBI Taxonomy" id="10141"/>
    <lineage>
        <taxon>Eukaryota</taxon>
        <taxon>Metazoa</taxon>
        <taxon>Chordata</taxon>
        <taxon>Craniata</taxon>
        <taxon>Vertebrata</taxon>
        <taxon>Euteleostomi</taxon>
        <taxon>Mammalia</taxon>
        <taxon>Eutheria</taxon>
        <taxon>Euarchontoglires</taxon>
        <taxon>Glires</taxon>
        <taxon>Rodentia</taxon>
        <taxon>Hystricomorpha</taxon>
        <taxon>Caviidae</taxon>
        <taxon>Cavia</taxon>
    </lineage>
</organism>
<accession>P23613</accession>
<evidence type="ECO:0000250" key="1"/>
<evidence type="ECO:0000255" key="2"/>
<evidence type="ECO:0000256" key="3">
    <source>
        <dbReference type="SAM" id="MobiDB-lite"/>
    </source>
</evidence>
<evidence type="ECO:0000305" key="4"/>
<comment type="function">
    <text>Involved in sperm-egg adhesion. Upon fertilization sperm must first penetrate a layer of cumulus cells that surrounds the egg before reaching the zona pellucida. The cumulus cells are embedded in a matrix containing hyaluronic acid which is formed prior to ovulation. This protein aids in penetrating the layer of cumulus cells by digesting hyaluronic acid.</text>
</comment>
<comment type="catalytic activity">
    <reaction>
        <text>Random hydrolysis of (1-&gt;4)-linkages between N-acetyl-beta-D-glucosamine and D-glucuronate residues in hyaluronate.</text>
        <dbReference type="EC" id="3.2.1.35"/>
    </reaction>
</comment>
<comment type="subcellular location">
    <subcellularLocation>
        <location>Cell membrane</location>
        <topology>Lipid-anchor</topology>
        <topology>GPI-anchor</topology>
    </subcellularLocation>
</comment>
<comment type="tissue specificity">
    <text>Testis.</text>
</comment>
<comment type="PTM">
    <text>Endoproteolysis (toward the C-terminus producing two disulfide-linked fragments) could activate PH-20.</text>
</comment>
<comment type="similarity">
    <text evidence="4">Belongs to the glycosyl hydrolase 56 family.</text>
</comment>
<sequence length="529" mass="60365">MGAFTFKHSFFGSFVECSGVLQTVFIFLLIPCCLADKRAPPLIPNVPLLWVWNAPTEFCIGGTNQPLDMSFFSIVGTPRKNITGQSITLYYVDRLGYYPYIDPHTGAIVHGGLPQLMNLQQHLRKSRQDILFYMPTDSVGLAVIDWEEWRPTWTRNWRPKDIYRNKSIELVKSQHPQYNHSYAVAVAKRDFERTGKAFMLETLKLGKSLRPSSLWGYYLFPDCYNTHFTKPNYDGHCPPIELQRNNDLQWLWNDSTALYPSVYLTSRVRSSQNGALYVRNRVHESIRVSKLMDDKNPLPIYVYIRLVFTDQTTTFLELDDLVHSVGEIVPLGVSGIIIWGSLSLTRSLVSCIGLENYMKGTLLPYLINVTLAAKMCGQVLCKNQGICTRKDWNTNTYLHLNATNFDIELQQNGKFVVHGKPSLEDLQEFSKNFHCSCYTNVACKDRLDVHNVRSVNVCTANNICIDAVLNFPSLDDDDEPPITDDTSQNQDSISDITSSAPPSSHILPKDLSWCLFLLSIFSQHWKYLL</sequence>
<protein>
    <recommendedName>
        <fullName>Hyaluronidase PH-20</fullName>
        <shortName>Hyal-PH20</shortName>
        <ecNumber>3.2.1.35</ecNumber>
    </recommendedName>
    <alternativeName>
        <fullName>Hyaluronoglucosaminidase PH-20</fullName>
    </alternativeName>
    <alternativeName>
        <fullName>Sperm adhesion molecule 1</fullName>
    </alternativeName>
    <alternativeName>
        <fullName>Sperm surface protein PH-20</fullName>
    </alternativeName>
</protein>
<feature type="signal peptide">
    <location>
        <begin position="1"/>
        <end position="35"/>
    </location>
</feature>
<feature type="chain" id="PRO_0000012087" description="Hyaluronidase PH-20">
    <location>
        <begin position="36"/>
        <end position="492"/>
    </location>
</feature>
<feature type="propeptide" id="PRO_0000012088" description="Removed in mature form" evidence="2">
    <location>
        <begin position="493"/>
        <end position="529"/>
    </location>
</feature>
<feature type="region of interest" description="Disordered" evidence="3">
    <location>
        <begin position="478"/>
        <end position="502"/>
    </location>
</feature>
<feature type="compositionally biased region" description="Polar residues" evidence="3">
    <location>
        <begin position="487"/>
        <end position="502"/>
    </location>
</feature>
<feature type="active site" description="Proton donor" evidence="1">
    <location>
        <position position="147"/>
    </location>
</feature>
<feature type="lipid moiety-binding region" description="GPI-anchor amidated serine" evidence="2">
    <location>
        <position position="492"/>
    </location>
</feature>
<feature type="glycosylation site" description="N-linked (GlcNAc...) asparagine" evidence="2">
    <location>
        <position position="81"/>
    </location>
</feature>
<feature type="glycosylation site" description="N-linked (GlcNAc...) asparagine" evidence="2">
    <location>
        <position position="165"/>
    </location>
</feature>
<feature type="glycosylation site" description="N-linked (GlcNAc...) asparagine" evidence="2">
    <location>
        <position position="179"/>
    </location>
</feature>
<feature type="glycosylation site" description="N-linked (GlcNAc...) asparagine" evidence="2">
    <location>
        <position position="253"/>
    </location>
</feature>
<feature type="glycosylation site" description="N-linked (GlcNAc...) asparagine" evidence="2">
    <location>
        <position position="368"/>
    </location>
</feature>
<feature type="glycosylation site" description="N-linked (GlcNAc...) asparagine" evidence="2">
    <location>
        <position position="401"/>
    </location>
</feature>
<feature type="disulfide bond" evidence="1">
    <location>
        <begin position="59"/>
        <end position="351"/>
    </location>
</feature>
<feature type="disulfide bond" evidence="1">
    <location>
        <begin position="223"/>
        <end position="237"/>
    </location>
</feature>
<feature type="disulfide bond" evidence="1">
    <location>
        <begin position="376"/>
        <end position="387"/>
    </location>
</feature>
<feature type="disulfide bond" evidence="1">
    <location>
        <begin position="381"/>
        <end position="435"/>
    </location>
</feature>
<feature type="disulfide bond" evidence="1">
    <location>
        <begin position="437"/>
        <end position="464"/>
    </location>
</feature>
<dbReference type="EC" id="3.2.1.35"/>
<dbReference type="EMBL" id="X56332">
    <property type="protein sequence ID" value="CAA39768.1"/>
    <property type="molecule type" value="mRNA"/>
</dbReference>
<dbReference type="PIR" id="A36343">
    <property type="entry name" value="A36343"/>
</dbReference>
<dbReference type="RefSeq" id="NP_001166492.1">
    <property type="nucleotide sequence ID" value="NM_001173021.2"/>
</dbReference>
<dbReference type="SMR" id="P23613"/>
<dbReference type="FunCoup" id="P23613">
    <property type="interactions" value="252"/>
</dbReference>
<dbReference type="STRING" id="10141.ENSCPOP00000001550"/>
<dbReference type="CAZy" id="GH56">
    <property type="family name" value="Glycoside Hydrolase Family 56"/>
</dbReference>
<dbReference type="GlyCosmos" id="P23613">
    <property type="glycosylation" value="6 sites, No reported glycans"/>
</dbReference>
<dbReference type="Ensembl" id="ENSCPOT00000001737.3">
    <property type="protein sequence ID" value="ENSCPOP00000001550.2"/>
    <property type="gene ID" value="ENSCPOG00000001716.4"/>
</dbReference>
<dbReference type="GeneID" id="100135624"/>
<dbReference type="KEGG" id="cpoc:100135624"/>
<dbReference type="CTD" id="6677"/>
<dbReference type="VEuPathDB" id="HostDB:ENSCPOG00000001716"/>
<dbReference type="eggNOG" id="ENOG502R6HD">
    <property type="taxonomic scope" value="Eukaryota"/>
</dbReference>
<dbReference type="GeneTree" id="ENSGT01020000230364"/>
<dbReference type="HOGENOM" id="CLU_036366_0_1_1"/>
<dbReference type="InParanoid" id="P23613"/>
<dbReference type="OMA" id="RAKIVFE"/>
<dbReference type="OrthoDB" id="5796153at2759"/>
<dbReference type="TreeFam" id="TF321598"/>
<dbReference type="Proteomes" id="UP000005447">
    <property type="component" value="Unassembled WGS sequence"/>
</dbReference>
<dbReference type="Bgee" id="ENSCPOG00000001716">
    <property type="expression patterns" value="Expressed in testis and 2 other cell types or tissues"/>
</dbReference>
<dbReference type="GO" id="GO:0001669">
    <property type="term" value="C:acrosomal vesicle"/>
    <property type="evidence" value="ECO:0007669"/>
    <property type="project" value="TreeGrafter"/>
</dbReference>
<dbReference type="GO" id="GO:0005886">
    <property type="term" value="C:plasma membrane"/>
    <property type="evidence" value="ECO:0007669"/>
    <property type="project" value="UniProtKB-SubCell"/>
</dbReference>
<dbReference type="GO" id="GO:0098552">
    <property type="term" value="C:side of membrane"/>
    <property type="evidence" value="ECO:0007669"/>
    <property type="project" value="UniProtKB-KW"/>
</dbReference>
<dbReference type="GO" id="GO:0004415">
    <property type="term" value="F:hyalurononglucosaminidase activity"/>
    <property type="evidence" value="ECO:0007669"/>
    <property type="project" value="UniProtKB-EC"/>
</dbReference>
<dbReference type="GO" id="GO:0005975">
    <property type="term" value="P:carbohydrate metabolic process"/>
    <property type="evidence" value="ECO:0007669"/>
    <property type="project" value="InterPro"/>
</dbReference>
<dbReference type="GO" id="GO:0007155">
    <property type="term" value="P:cell adhesion"/>
    <property type="evidence" value="ECO:0007669"/>
    <property type="project" value="UniProtKB-KW"/>
</dbReference>
<dbReference type="GO" id="GO:0007342">
    <property type="term" value="P:fusion of sperm to egg plasma membrane involved in single fertilization"/>
    <property type="evidence" value="ECO:0007669"/>
    <property type="project" value="InterPro"/>
</dbReference>
<dbReference type="GO" id="GO:0030214">
    <property type="term" value="P:hyaluronan catabolic process"/>
    <property type="evidence" value="ECO:0007669"/>
    <property type="project" value="TreeGrafter"/>
</dbReference>
<dbReference type="FunFam" id="3.20.20.70:FF:000065">
    <property type="entry name" value="Hyaluronidase"/>
    <property type="match status" value="1"/>
</dbReference>
<dbReference type="Gene3D" id="3.20.20.70">
    <property type="entry name" value="Aldolase class I"/>
    <property type="match status" value="1"/>
</dbReference>
<dbReference type="InterPro" id="IPR013785">
    <property type="entry name" value="Aldolase_TIM"/>
</dbReference>
<dbReference type="InterPro" id="IPR017853">
    <property type="entry name" value="Glycoside_hydrolase_SF"/>
</dbReference>
<dbReference type="InterPro" id="IPR018155">
    <property type="entry name" value="Hyaluronidase"/>
</dbReference>
<dbReference type="InterPro" id="IPR001439">
    <property type="entry name" value="Hyaluronidase_PH20/Hyal5"/>
</dbReference>
<dbReference type="PANTHER" id="PTHR11769">
    <property type="entry name" value="HYALURONIDASE"/>
    <property type="match status" value="1"/>
</dbReference>
<dbReference type="PANTHER" id="PTHR11769:SF20">
    <property type="entry name" value="HYALURONIDASE PH-20"/>
    <property type="match status" value="1"/>
</dbReference>
<dbReference type="Pfam" id="PF01630">
    <property type="entry name" value="Glyco_hydro_56"/>
    <property type="match status" value="1"/>
</dbReference>
<dbReference type="PIRSF" id="PIRSF038193">
    <property type="entry name" value="Hyaluronidase"/>
    <property type="match status" value="1"/>
</dbReference>
<dbReference type="PIRSF" id="PIRSF500773">
    <property type="entry name" value="Hyaluronidase_PH20_Hyal5"/>
    <property type="match status" value="1"/>
</dbReference>
<dbReference type="PRINTS" id="PR00846">
    <property type="entry name" value="GLHYDRLASE56"/>
</dbReference>
<dbReference type="PRINTS" id="PR00848">
    <property type="entry name" value="SPERMPH20"/>
</dbReference>
<dbReference type="SUPFAM" id="SSF51445">
    <property type="entry name" value="(Trans)glycosidases"/>
    <property type="match status" value="1"/>
</dbReference>
<name>HYALP_CAVPO</name>